<comment type="function">
    <text evidence="1">Catalyzes the reduction of the macrocycle of precorrin-6X into precorrin-6Y.</text>
</comment>
<comment type="catalytic activity">
    <reaction>
        <text>precorrin-6B + NADP(+) = precorrin-6A + NADPH + 2 H(+)</text>
        <dbReference type="Rhea" id="RHEA:23408"/>
        <dbReference type="ChEBI" id="CHEBI:15378"/>
        <dbReference type="ChEBI" id="CHEBI:57783"/>
        <dbReference type="ChEBI" id="CHEBI:58349"/>
        <dbReference type="ChEBI" id="CHEBI:58532"/>
        <dbReference type="ChEBI" id="CHEBI:77872"/>
        <dbReference type="EC" id="1.3.1.54"/>
    </reaction>
</comment>
<comment type="pathway">
    <text>Cofactor biosynthesis; adenosylcobalamin biosynthesis; cob(II)yrinate a,c-diamide from precorrin-2 (aerobic route): step 6/10.</text>
</comment>
<comment type="similarity">
    <text evidence="2">Belongs to the precorrin-6x reductase family.</text>
</comment>
<name>COBK_MYCTO</name>
<evidence type="ECO:0000250" key="1"/>
<evidence type="ECO:0000255" key="2">
    <source>
        <dbReference type="PROSITE-ProRule" id="PRU00356"/>
    </source>
</evidence>
<accession>P9WP88</accession>
<accession>L0TBE4</accession>
<accession>Q10680</accession>
<reference key="1">
    <citation type="journal article" date="2002" name="J. Bacteriol.">
        <title>Whole-genome comparison of Mycobacterium tuberculosis clinical and laboratory strains.</title>
        <authorList>
            <person name="Fleischmann R.D."/>
            <person name="Alland D."/>
            <person name="Eisen J.A."/>
            <person name="Carpenter L."/>
            <person name="White O."/>
            <person name="Peterson J.D."/>
            <person name="DeBoy R.T."/>
            <person name="Dodson R.J."/>
            <person name="Gwinn M.L."/>
            <person name="Haft D.H."/>
            <person name="Hickey E.K."/>
            <person name="Kolonay J.F."/>
            <person name="Nelson W.C."/>
            <person name="Umayam L.A."/>
            <person name="Ermolaeva M.D."/>
            <person name="Salzberg S.L."/>
            <person name="Delcher A."/>
            <person name="Utterback T.R."/>
            <person name="Weidman J.F."/>
            <person name="Khouri H.M."/>
            <person name="Gill J."/>
            <person name="Mikula A."/>
            <person name="Bishai W."/>
            <person name="Jacobs W.R. Jr."/>
            <person name="Venter J.C."/>
            <person name="Fraser C.M."/>
        </authorList>
    </citation>
    <scope>NUCLEOTIDE SEQUENCE [LARGE SCALE GENOMIC DNA]</scope>
    <source>
        <strain>CDC 1551 / Oshkosh</strain>
    </source>
</reference>
<proteinExistence type="inferred from homology"/>
<dbReference type="EC" id="1.3.1.54"/>
<dbReference type="EMBL" id="AE000516">
    <property type="protein sequence ID" value="AAK46410.1"/>
    <property type="molecule type" value="Genomic_DNA"/>
</dbReference>
<dbReference type="PIR" id="A70765">
    <property type="entry name" value="A70765"/>
</dbReference>
<dbReference type="RefSeq" id="WP_003900455.1">
    <property type="nucleotide sequence ID" value="NZ_KK341227.1"/>
</dbReference>
<dbReference type="SMR" id="P9WP88"/>
<dbReference type="KEGG" id="mtc:MT2130"/>
<dbReference type="PATRIC" id="fig|83331.31.peg.2298"/>
<dbReference type="HOGENOM" id="CLU_068627_1_0_11"/>
<dbReference type="UniPathway" id="UPA00148">
    <property type="reaction ID" value="UER00217"/>
</dbReference>
<dbReference type="Proteomes" id="UP000001020">
    <property type="component" value="Chromosome"/>
</dbReference>
<dbReference type="GO" id="GO:0016994">
    <property type="term" value="F:precorrin-6A reductase activity"/>
    <property type="evidence" value="ECO:0007669"/>
    <property type="project" value="UniProtKB-EC"/>
</dbReference>
<dbReference type="GO" id="GO:0009236">
    <property type="term" value="P:cobalamin biosynthetic process"/>
    <property type="evidence" value="ECO:0007669"/>
    <property type="project" value="UniProtKB-UniPathway"/>
</dbReference>
<dbReference type="InterPro" id="IPR003723">
    <property type="entry name" value="Precorrin-6x_reduct"/>
</dbReference>
<dbReference type="NCBIfam" id="TIGR00715">
    <property type="entry name" value="precor6x_red"/>
    <property type="match status" value="1"/>
</dbReference>
<dbReference type="NCBIfam" id="NF005968">
    <property type="entry name" value="PRK08057.1-2"/>
    <property type="match status" value="1"/>
</dbReference>
<dbReference type="PANTHER" id="PTHR36925">
    <property type="entry name" value="COBALT-PRECORRIN-6A REDUCTASE"/>
    <property type="match status" value="1"/>
</dbReference>
<dbReference type="PANTHER" id="PTHR36925:SF1">
    <property type="entry name" value="COBALT-PRECORRIN-6A REDUCTASE"/>
    <property type="match status" value="1"/>
</dbReference>
<dbReference type="Pfam" id="PF02571">
    <property type="entry name" value="CbiJ"/>
    <property type="match status" value="1"/>
</dbReference>
<dbReference type="PROSITE" id="PS51014">
    <property type="entry name" value="COBK_CBIJ"/>
    <property type="match status" value="1"/>
</dbReference>
<organism>
    <name type="scientific">Mycobacterium tuberculosis (strain CDC 1551 / Oshkosh)</name>
    <dbReference type="NCBI Taxonomy" id="83331"/>
    <lineage>
        <taxon>Bacteria</taxon>
        <taxon>Bacillati</taxon>
        <taxon>Actinomycetota</taxon>
        <taxon>Actinomycetes</taxon>
        <taxon>Mycobacteriales</taxon>
        <taxon>Mycobacteriaceae</taxon>
        <taxon>Mycobacterium</taxon>
        <taxon>Mycobacterium tuberculosis complex</taxon>
    </lineage>
</organism>
<protein>
    <recommendedName>
        <fullName>Precorrin-6A reductase</fullName>
        <ecNumber>1.3.1.54</ecNumber>
    </recommendedName>
    <alternativeName>
        <fullName>Precorrin-6X reductase</fullName>
    </alternativeName>
</protein>
<sequence length="244" mass="25737">MTRVLLLGGTAEGRALAKELHPHVEIVSSLAGRVPNPALPIGPVRIGGFGGVEGLRGWLREERIDAVVDATHPFAVTITAHAAQVCGELGLPYLVLARPPWDPGTAIIAVSDIEAADVVAEQGYSRVFLTTGRSGIAAFANSDAWFLIRVVTAPDGTALPRRHKLVLSRGPYGYHDEFALLREQRIDALVTKNSGGKMTRAKLDAAAALGISVVMIARPLLPAGVAAVDSVHRAAMWVAGLPSR</sequence>
<gene>
    <name type="primary">cobK</name>
    <name type="ordered locus">MT2130</name>
</gene>
<feature type="chain" id="PRO_0000426994" description="Precorrin-6A reductase">
    <location>
        <begin position="1"/>
        <end position="244"/>
    </location>
</feature>
<keyword id="KW-0169">Cobalamin biosynthesis</keyword>
<keyword id="KW-0521">NADP</keyword>
<keyword id="KW-0560">Oxidoreductase</keyword>
<keyword id="KW-1185">Reference proteome</keyword>